<evidence type="ECO:0000250" key="1">
    <source>
        <dbReference type="UniProtKB" id="P62820"/>
    </source>
</evidence>
<evidence type="ECO:0000250" key="2">
    <source>
        <dbReference type="UniProtKB" id="Q96S21"/>
    </source>
</evidence>
<evidence type="ECO:0000255" key="3"/>
<evidence type="ECO:0000255" key="4">
    <source>
        <dbReference type="PROSITE-ProRule" id="PRU00194"/>
    </source>
</evidence>
<evidence type="ECO:0000255" key="5">
    <source>
        <dbReference type="PROSITE-ProRule" id="PRU00753"/>
    </source>
</evidence>
<evidence type="ECO:0000256" key="6">
    <source>
        <dbReference type="SAM" id="MobiDB-lite"/>
    </source>
</evidence>
<evidence type="ECO:0000269" key="7">
    <source>
    </source>
</evidence>
<evidence type="ECO:0000269" key="8">
    <source>
    </source>
</evidence>
<evidence type="ECO:0000269" key="9">
    <source>
    </source>
</evidence>
<evidence type="ECO:0000305" key="10"/>
<evidence type="ECO:0000312" key="11">
    <source>
        <dbReference type="HGNC" id="HGNC:18284"/>
    </source>
</evidence>
<name>RB40B_HUMAN</name>
<sequence length="278" mass="30956">MSALGSPVRAYDFLLKFLLVGDSDVGKGEILASLQDGAAESPYGHPAGIDYKTTTILLDGRRVKLQLWDTSGQGRFCTIFRSYSRGAQGVILVYDIANRWSFDGIDRWIKEIDEHAPGVPKILVGNRLHLAFKRQVPTEQAQAYAERLGVTFFEVSPLCNFNITESFTELARIVLLRHGMDRLWRPSKVLSLQDLCCRAVVSCTPVHLVDKLPLPIALRSHLKSFSMANGLNARMMHGGSYSLTTSSTHKRSSLRKVKLVRPPQSPPKNCTRNSCKIS</sequence>
<protein>
    <recommendedName>
        <fullName>Ras-related protein Rab-40B</fullName>
        <ecNumber evidence="2">3.6.5.2</ecNumber>
    </recommendedName>
    <alternativeName>
        <fullName>SOCS box-containing protein RAR</fullName>
        <shortName>Protein Rar</shortName>
    </alternativeName>
</protein>
<keyword id="KW-1003">Cell membrane</keyword>
<keyword id="KW-0966">Cell projection</keyword>
<keyword id="KW-0963">Cytoplasm</keyword>
<keyword id="KW-0342">GTP-binding</keyword>
<keyword id="KW-0378">Hydrolase</keyword>
<keyword id="KW-0449">Lipoprotein</keyword>
<keyword id="KW-0460">Magnesium</keyword>
<keyword id="KW-0472">Membrane</keyword>
<keyword id="KW-0479">Metal-binding</keyword>
<keyword id="KW-0547">Nucleotide-binding</keyword>
<keyword id="KW-0564">Palmitate</keyword>
<keyword id="KW-0636">Prenylation</keyword>
<keyword id="KW-1267">Proteomics identification</keyword>
<keyword id="KW-1185">Reference proteome</keyword>
<keyword id="KW-0833">Ubl conjugation pathway</keyword>
<proteinExistence type="evidence at protein level"/>
<accession>Q12829</accession>
<accession>Q8WVG3</accession>
<feature type="chain" id="PRO_0000121259" description="Ras-related protein Rab-40B">
    <location>
        <begin position="1"/>
        <end position="278"/>
    </location>
</feature>
<feature type="domain" description="SOCS box" evidence="4">
    <location>
        <begin position="175"/>
        <end position="228"/>
    </location>
</feature>
<feature type="region of interest" description="Switch-I" evidence="5">
    <location>
        <begin position="41"/>
        <end position="49"/>
    </location>
</feature>
<feature type="region of interest" description="Switch-II" evidence="5">
    <location>
        <begin position="72"/>
        <end position="88"/>
    </location>
</feature>
<feature type="region of interest" description="Disordered" evidence="6">
    <location>
        <begin position="242"/>
        <end position="278"/>
    </location>
</feature>
<feature type="compositionally biased region" description="Basic residues" evidence="6">
    <location>
        <begin position="248"/>
        <end position="259"/>
    </location>
</feature>
<feature type="compositionally biased region" description="Polar residues" evidence="6">
    <location>
        <begin position="267"/>
        <end position="278"/>
    </location>
</feature>
<feature type="binding site" evidence="1">
    <location>
        <position position="23"/>
    </location>
    <ligand>
        <name>GTP</name>
        <dbReference type="ChEBI" id="CHEBI:37565"/>
    </ligand>
</feature>
<feature type="binding site" evidence="1">
    <location>
        <position position="26"/>
    </location>
    <ligand>
        <name>GTP</name>
        <dbReference type="ChEBI" id="CHEBI:37565"/>
    </ligand>
</feature>
<feature type="binding site" evidence="1">
    <location>
        <position position="27"/>
    </location>
    <ligand>
        <name>GTP</name>
        <dbReference type="ChEBI" id="CHEBI:37565"/>
    </ligand>
</feature>
<feature type="binding site" evidence="1">
    <location>
        <position position="69"/>
    </location>
    <ligand>
        <name>Mg(2+)</name>
        <dbReference type="ChEBI" id="CHEBI:18420"/>
    </ligand>
</feature>
<feature type="binding site" evidence="1">
    <location>
        <position position="72"/>
    </location>
    <ligand>
        <name>GTP</name>
        <dbReference type="ChEBI" id="CHEBI:37565"/>
    </ligand>
</feature>
<feature type="binding site" evidence="1">
    <location>
        <position position="126"/>
    </location>
    <ligand>
        <name>GTP</name>
        <dbReference type="ChEBI" id="CHEBI:37565"/>
    </ligand>
</feature>
<feature type="binding site" evidence="1">
    <location>
        <position position="127"/>
    </location>
    <ligand>
        <name>GTP</name>
        <dbReference type="ChEBI" id="CHEBI:37565"/>
    </ligand>
</feature>
<feature type="lipid moiety-binding region" description="S-palmitoyl cysteine" evidence="3">
    <location>
        <position position="270"/>
    </location>
</feature>
<feature type="lipid moiety-binding region" description="S-geranylgeranyl cysteine" evidence="1">
    <location>
        <position position="275"/>
    </location>
</feature>
<feature type="mutagenesis site" description="Abolishes interaction with CUL5. Decreased cell directionality, chemotactic migration and invasion. Decreased levels of actin ruffles. Increased focal adhesion number, size and subcellular distribution." evidence="8">
    <original>LPLP</original>
    <variation>AAAA</variation>
    <location>
        <begin position="212"/>
        <end position="215"/>
    </location>
</feature>
<feature type="sequence conflict" description="In Ref. 2; AAH18039." evidence="10" ref="2">
    <original>P</original>
    <variation>T</variation>
    <location>
        <position position="42"/>
    </location>
</feature>
<dbReference type="EC" id="3.6.5.2" evidence="2"/>
<dbReference type="EMBL" id="U05227">
    <property type="protein sequence ID" value="AAA17031.1"/>
    <property type="molecule type" value="mRNA"/>
</dbReference>
<dbReference type="EMBL" id="BC018039">
    <property type="protein sequence ID" value="AAH18039.1"/>
    <property type="molecule type" value="mRNA"/>
</dbReference>
<dbReference type="CCDS" id="CCDS11816.1"/>
<dbReference type="PIR" id="G01251">
    <property type="entry name" value="G01251"/>
</dbReference>
<dbReference type="RefSeq" id="NP_006813.1">
    <property type="nucleotide sequence ID" value="NM_006822.3"/>
</dbReference>
<dbReference type="SMR" id="Q12829"/>
<dbReference type="BioGRID" id="116165">
    <property type="interactions" value="35"/>
</dbReference>
<dbReference type="FunCoup" id="Q12829">
    <property type="interactions" value="787"/>
</dbReference>
<dbReference type="IntAct" id="Q12829">
    <property type="interactions" value="13"/>
</dbReference>
<dbReference type="STRING" id="9606.ENSP00000461785"/>
<dbReference type="GlyGen" id="Q12829">
    <property type="glycosylation" value="1 site, 1 O-linked glycan (1 site)"/>
</dbReference>
<dbReference type="iPTMnet" id="Q12829"/>
<dbReference type="PhosphoSitePlus" id="Q12829"/>
<dbReference type="BioMuta" id="RAB40B"/>
<dbReference type="DMDM" id="27734453"/>
<dbReference type="jPOST" id="Q12829"/>
<dbReference type="MassIVE" id="Q12829"/>
<dbReference type="PaxDb" id="9606-ENSP00000461785"/>
<dbReference type="PeptideAtlas" id="Q12829"/>
<dbReference type="ProteomicsDB" id="58972"/>
<dbReference type="Antibodypedia" id="33036">
    <property type="antibodies" value="151 antibodies from 28 providers"/>
</dbReference>
<dbReference type="DNASU" id="10966"/>
<dbReference type="Ensembl" id="ENST00000571995.6">
    <property type="protein sequence ID" value="ENSP00000461785.1"/>
    <property type="gene ID" value="ENSG00000141542.11"/>
</dbReference>
<dbReference type="GeneID" id="10966"/>
<dbReference type="KEGG" id="hsa:10966"/>
<dbReference type="MANE-Select" id="ENST00000571995.6">
    <property type="protein sequence ID" value="ENSP00000461785.1"/>
    <property type="RefSeq nucleotide sequence ID" value="NM_006822.3"/>
    <property type="RefSeq protein sequence ID" value="NP_006813.1"/>
</dbReference>
<dbReference type="UCSC" id="uc002kft.4">
    <property type="organism name" value="human"/>
</dbReference>
<dbReference type="AGR" id="HGNC:18284"/>
<dbReference type="CTD" id="10966"/>
<dbReference type="DisGeNET" id="10966"/>
<dbReference type="GeneCards" id="RAB40B"/>
<dbReference type="HGNC" id="HGNC:18284">
    <property type="gene designation" value="RAB40B"/>
</dbReference>
<dbReference type="HPA" id="ENSG00000141542">
    <property type="expression patterns" value="Tissue enhanced (brain)"/>
</dbReference>
<dbReference type="MIM" id="619550">
    <property type="type" value="gene"/>
</dbReference>
<dbReference type="neXtProt" id="NX_Q12829"/>
<dbReference type="OpenTargets" id="ENSG00000141542"/>
<dbReference type="PharmGKB" id="PA34138"/>
<dbReference type="VEuPathDB" id="HostDB:ENSG00000141542"/>
<dbReference type="eggNOG" id="KOG0078">
    <property type="taxonomic scope" value="Eukaryota"/>
</dbReference>
<dbReference type="GeneTree" id="ENSGT00940000161207"/>
<dbReference type="HOGENOM" id="CLU_041217_11_0_1"/>
<dbReference type="InParanoid" id="Q12829"/>
<dbReference type="OMA" id="HKRNSFR"/>
<dbReference type="OrthoDB" id="6339763at2759"/>
<dbReference type="PAN-GO" id="Q12829">
    <property type="GO annotations" value="5 GO annotations based on evolutionary models"/>
</dbReference>
<dbReference type="PhylomeDB" id="Q12829"/>
<dbReference type="TreeFam" id="TF323230"/>
<dbReference type="PathwayCommons" id="Q12829"/>
<dbReference type="Reactome" id="R-HSA-8873719">
    <property type="pathway name" value="RAB geranylgeranylation"/>
</dbReference>
<dbReference type="SignaLink" id="Q12829"/>
<dbReference type="UniPathway" id="UPA00143"/>
<dbReference type="BioGRID-ORCS" id="10966">
    <property type="hits" value="14 hits in 1158 CRISPR screens"/>
</dbReference>
<dbReference type="ChiTaRS" id="RAB40B">
    <property type="organism name" value="human"/>
</dbReference>
<dbReference type="GenomeRNAi" id="10966"/>
<dbReference type="Pharos" id="Q12829">
    <property type="development level" value="Tbio"/>
</dbReference>
<dbReference type="PRO" id="PR:Q12829"/>
<dbReference type="Proteomes" id="UP000005640">
    <property type="component" value="Chromosome 17"/>
</dbReference>
<dbReference type="RNAct" id="Q12829">
    <property type="molecule type" value="protein"/>
</dbReference>
<dbReference type="Bgee" id="ENSG00000141542">
    <property type="expression patterns" value="Expressed in medial globus pallidus and 203 other cell types or tissues"/>
</dbReference>
<dbReference type="ExpressionAtlas" id="Q12829">
    <property type="expression patterns" value="baseline and differential"/>
</dbReference>
<dbReference type="GO" id="GO:0005768">
    <property type="term" value="C:endosome"/>
    <property type="evidence" value="ECO:0000318"/>
    <property type="project" value="GO_Central"/>
</dbReference>
<dbReference type="GO" id="GO:0005635">
    <property type="term" value="C:nuclear envelope"/>
    <property type="evidence" value="ECO:0000314"/>
    <property type="project" value="ParkinsonsUK-UCL"/>
</dbReference>
<dbReference type="GO" id="GO:0048471">
    <property type="term" value="C:perinuclear region of cytoplasm"/>
    <property type="evidence" value="ECO:0000314"/>
    <property type="project" value="ParkinsonsUK-UCL"/>
</dbReference>
<dbReference type="GO" id="GO:0005886">
    <property type="term" value="C:plasma membrane"/>
    <property type="evidence" value="ECO:0000318"/>
    <property type="project" value="GO_Central"/>
</dbReference>
<dbReference type="GO" id="GO:0008021">
    <property type="term" value="C:synaptic vesicle"/>
    <property type="evidence" value="ECO:0000318"/>
    <property type="project" value="GO_Central"/>
</dbReference>
<dbReference type="GO" id="GO:0005525">
    <property type="term" value="F:GTP binding"/>
    <property type="evidence" value="ECO:0007669"/>
    <property type="project" value="UniProtKB-KW"/>
</dbReference>
<dbReference type="GO" id="GO:0003924">
    <property type="term" value="F:GTPase activity"/>
    <property type="evidence" value="ECO:0000318"/>
    <property type="project" value="GO_Central"/>
</dbReference>
<dbReference type="GO" id="GO:1990748">
    <property type="term" value="P:cellular detoxification"/>
    <property type="evidence" value="ECO:0000315"/>
    <property type="project" value="ParkinsonsUK-UCL"/>
</dbReference>
<dbReference type="GO" id="GO:0006887">
    <property type="term" value="P:exocytosis"/>
    <property type="evidence" value="ECO:0000318"/>
    <property type="project" value="GO_Central"/>
</dbReference>
<dbReference type="GO" id="GO:0035556">
    <property type="term" value="P:intracellular signal transduction"/>
    <property type="evidence" value="ECO:0007669"/>
    <property type="project" value="InterPro"/>
</dbReference>
<dbReference type="GO" id="GO:0016567">
    <property type="term" value="P:protein ubiquitination"/>
    <property type="evidence" value="ECO:0007669"/>
    <property type="project" value="UniProtKB-UniPathway"/>
</dbReference>
<dbReference type="CDD" id="cd04121">
    <property type="entry name" value="Rab40"/>
    <property type="match status" value="1"/>
</dbReference>
<dbReference type="CDD" id="cd03742">
    <property type="entry name" value="SOCS_Rab40"/>
    <property type="match status" value="1"/>
</dbReference>
<dbReference type="FunFam" id="3.40.50.300:FF:000371">
    <property type="entry name" value="RAB40C, member RAS oncogene family"/>
    <property type="match status" value="1"/>
</dbReference>
<dbReference type="Gene3D" id="3.40.50.300">
    <property type="entry name" value="P-loop containing nucleotide triphosphate hydrolases"/>
    <property type="match status" value="1"/>
</dbReference>
<dbReference type="InterPro" id="IPR027417">
    <property type="entry name" value="P-loop_NTPase"/>
</dbReference>
<dbReference type="InterPro" id="IPR005225">
    <property type="entry name" value="Small_GTP-bd"/>
</dbReference>
<dbReference type="InterPro" id="IPR001806">
    <property type="entry name" value="Small_GTPase"/>
</dbReference>
<dbReference type="InterPro" id="IPR050305">
    <property type="entry name" value="Small_GTPase_Rab"/>
</dbReference>
<dbReference type="InterPro" id="IPR001496">
    <property type="entry name" value="SOCS_box"/>
</dbReference>
<dbReference type="InterPro" id="IPR036036">
    <property type="entry name" value="SOCS_box-like_dom_sf"/>
</dbReference>
<dbReference type="NCBIfam" id="TIGR00231">
    <property type="entry name" value="small_GTP"/>
    <property type="match status" value="1"/>
</dbReference>
<dbReference type="PANTHER" id="PTHR47980">
    <property type="entry name" value="LD44762P"/>
    <property type="match status" value="1"/>
</dbReference>
<dbReference type="Pfam" id="PF00071">
    <property type="entry name" value="Ras"/>
    <property type="match status" value="1"/>
</dbReference>
<dbReference type="Pfam" id="PF07525">
    <property type="entry name" value="SOCS_box"/>
    <property type="match status" value="1"/>
</dbReference>
<dbReference type="PRINTS" id="PR00449">
    <property type="entry name" value="RASTRNSFRMNG"/>
</dbReference>
<dbReference type="SMART" id="SM00175">
    <property type="entry name" value="RAB"/>
    <property type="match status" value="1"/>
</dbReference>
<dbReference type="SMART" id="SM00176">
    <property type="entry name" value="RAN"/>
    <property type="match status" value="1"/>
</dbReference>
<dbReference type="SMART" id="SM00173">
    <property type="entry name" value="RAS"/>
    <property type="match status" value="1"/>
</dbReference>
<dbReference type="SMART" id="SM00174">
    <property type="entry name" value="RHO"/>
    <property type="match status" value="1"/>
</dbReference>
<dbReference type="SMART" id="SM00253">
    <property type="entry name" value="SOCS"/>
    <property type="match status" value="1"/>
</dbReference>
<dbReference type="SMART" id="SM00969">
    <property type="entry name" value="SOCS_box"/>
    <property type="match status" value="1"/>
</dbReference>
<dbReference type="SUPFAM" id="SSF52540">
    <property type="entry name" value="P-loop containing nucleoside triphosphate hydrolases"/>
    <property type="match status" value="1"/>
</dbReference>
<dbReference type="SUPFAM" id="SSF158235">
    <property type="entry name" value="SOCS box-like"/>
    <property type="match status" value="1"/>
</dbReference>
<dbReference type="PROSITE" id="PS51419">
    <property type="entry name" value="RAB"/>
    <property type="match status" value="1"/>
</dbReference>
<dbReference type="PROSITE" id="PS50225">
    <property type="entry name" value="SOCS"/>
    <property type="match status" value="1"/>
</dbReference>
<organism>
    <name type="scientific">Homo sapiens</name>
    <name type="common">Human</name>
    <dbReference type="NCBI Taxonomy" id="9606"/>
    <lineage>
        <taxon>Eukaryota</taxon>
        <taxon>Metazoa</taxon>
        <taxon>Chordata</taxon>
        <taxon>Craniata</taxon>
        <taxon>Vertebrata</taxon>
        <taxon>Euteleostomi</taxon>
        <taxon>Mammalia</taxon>
        <taxon>Eutheria</taxon>
        <taxon>Euarchontoglires</taxon>
        <taxon>Primates</taxon>
        <taxon>Haplorrhini</taxon>
        <taxon>Catarrhini</taxon>
        <taxon>Hominidae</taxon>
        <taxon>Homo</taxon>
    </lineage>
</organism>
<gene>
    <name evidence="11" type="primary">RAB40B</name>
    <name type="synonym">SEC4L</name>
</gene>
<comment type="function">
    <text evidence="7 8 9">RAB40B small GTPase acts as substrate-recognition components of the ECS(RAB40B) E3 ubiquitin ligase complex which mediates the ubiquitination of target proteins (PubMed:33999101, PubMed:35293963). The Rab40 subfamily belongs to the Rab family that are key regulators of intracellular membrane trafficking, from the formation of transport vesicles to their fusion with membranes. Rabs cycle between an inactive GDP-bound form and an active GTP-bound form that is able to recruit to membranes different sets of downstream effectors directly responsible for vesicle formation, movement, tethering and fusion (PubMed:27789576). As part of the ECS(RAB40B) complex, GTP-bound RAB40B promotes LIMA1/EPLIN ubiquitination and degradation, thereby regulating leading-edge actin dynamics during cell migration (PubMed:33999101). As part of the ECS(RAB40B) complex, GTP-bound RAB40B also ubiquitinates RAP2A GTPase which promotes its localization to lamellipodia and activation to drive cell migration. The ECS(RAB40B) complex does not mediate canonical ubiquitin-dependent degradation of RAP2 (PubMed:35293963). RAB40B also binds TKS5/SH3PXD2A effector independently from ECS complex to promote invadopodia-mediated extracellular matrix degradation (PubMed:27789576).</text>
</comment>
<comment type="catalytic activity">
    <reaction evidence="2">
        <text>GTP + H2O = GDP + phosphate + H(+)</text>
        <dbReference type="Rhea" id="RHEA:19669"/>
        <dbReference type="ChEBI" id="CHEBI:15377"/>
        <dbReference type="ChEBI" id="CHEBI:15378"/>
        <dbReference type="ChEBI" id="CHEBI:37565"/>
        <dbReference type="ChEBI" id="CHEBI:43474"/>
        <dbReference type="ChEBI" id="CHEBI:58189"/>
        <dbReference type="EC" id="3.6.5.2"/>
    </reaction>
    <physiologicalReaction direction="left-to-right" evidence="2">
        <dbReference type="Rhea" id="RHEA:19670"/>
    </physiologicalReaction>
</comment>
<comment type="cofactor">
    <cofactor evidence="1">
        <name>Mg(2+)</name>
        <dbReference type="ChEBI" id="CHEBI:18420"/>
    </cofactor>
</comment>
<comment type="activity regulation">
    <text evidence="1">Regulated by guanine nucleotide exchange factors (GEFs) which promote the exchange of bound GDP for free GTP. Regulated by GTPase activating proteins (GAPs) which increase the GTP hydrolysis activity. Inhibited by GDP dissociation inhibitors (GDIs).</text>
</comment>
<comment type="pathway">
    <text>Protein modification; protein ubiquitination.</text>
</comment>
<comment type="subunit">
    <text evidence="7 8 9">Component of the cullin-5-RING E3 ubiquitin-protein ligase complex (ECS(RAB40B) complex) composed of CUL5, Elongin BC (ELOB and ELOC), RNF7/RBX2 and RAB40B; RAB40B interaction with ECS complex is GTP-independent (PubMed:33999101, PubMed:35293963). Binds (GTP-bound) LIMA1; interaction promotes LIMA1 subcellular localization in lamellipodia during cell migration (PubMed:33999101). Interacts (GTP-bound) with TKS5/SH3PXD2A (via PX domain); interaction promotes invadopodia-mediated extracellular matrix degradation (PubMed:27789576).</text>
</comment>
<comment type="interaction">
    <interactant intactId="EBI-3915431">
        <id>Q12829</id>
    </interactant>
    <interactant intactId="EBI-743414">
        <id>O95967</id>
        <label>EFEMP2</label>
    </interactant>
    <organismsDiffer>false</organismsDiffer>
    <experiments>3</experiments>
</comment>
<comment type="subcellular location">
    <subcellularLocation>
        <location evidence="10">Cell membrane</location>
        <topology evidence="10">Lipid-anchor</topology>
        <orientation evidence="10">Cytoplasmic side</orientation>
    </subcellularLocation>
    <subcellularLocation>
        <location evidence="8">Cytoplasm</location>
        <location evidence="8">Cytosol</location>
    </subcellularLocation>
    <subcellularLocation>
        <location evidence="8 9">Cell projection</location>
        <location evidence="8 9">Lamellipodium membrane</location>
    </subcellularLocation>
    <subcellularLocation>
        <location evidence="8">Cell projection</location>
        <location evidence="8">Ruffle</location>
    </subcellularLocation>
    <text evidence="8 9">Mainly localized in the cytosol (PubMed:33999101). A subpopulation is present at the lamellipodia, where it colocalizes with actin ruffles (PubMed:33999101). Colocalized with RAP2A at the lamellipodia plasma membrane (PubMed:35293963).</text>
</comment>
<comment type="domain">
    <text evidence="2">The SOCS box contains two defined motifs including the BC box that recruits and binds Elongin BC complex, and the Cul box which interacts with the Cullin family of proteins to form a ECS (Elongin-Cullin-SOCS-box protein) E3 ubiquitin ligase complex.</text>
</comment>
<comment type="domain">
    <text evidence="1">Switch I, switch II and the interswitch regions are characteristic of Rab GTPases and mediate the interactions with Rab downstream effectors. The switch regions undergo conformational changes upon nucleotide binding which drive interaction with specific sets of effector proteins, with most effectors only binding to GTP-bound Rab.</text>
</comment>
<comment type="similarity">
    <text evidence="10">Belongs to the small GTPase superfamily. Rab family.</text>
</comment>
<reference key="1">
    <citation type="submission" date="1994-01" db="EMBL/GenBank/DDBJ databases">
        <title>Characterization of a human hippocampus cDNA clone encoding a novel SEC-4 like protein.</title>
        <authorList>
            <person name="Peng H."/>
            <person name="Lee J."/>
            <person name="Chang H."/>
        </authorList>
    </citation>
    <scope>NUCLEOTIDE SEQUENCE [MRNA]</scope>
    <source>
        <tissue>Hippocampus</tissue>
    </source>
</reference>
<reference key="2">
    <citation type="journal article" date="2004" name="Genome Res.">
        <title>The status, quality, and expansion of the NIH full-length cDNA project: the Mammalian Gene Collection (MGC).</title>
        <authorList>
            <consortium name="The MGC Project Team"/>
        </authorList>
    </citation>
    <scope>NUCLEOTIDE SEQUENCE [LARGE SCALE MRNA]</scope>
    <source>
        <tissue>Brain</tissue>
    </source>
</reference>
<reference key="3">
    <citation type="journal article" date="2016" name="J. Cell Sci.">
        <title>The role and regulation of Rab40b-Tks5 complex during invadopodia formation and cancer cell invasion.</title>
        <authorList>
            <person name="Jacob A."/>
            <person name="Linklater E."/>
            <person name="Bayless B.A."/>
            <person name="Lyons T."/>
            <person name="Prekeris R."/>
        </authorList>
    </citation>
    <scope>FUNCTION</scope>
    <scope>INTERACTION WITH SH3PXD2A</scope>
</reference>
<reference key="4">
    <citation type="journal article" date="2021" name="J. Cell Biol.">
        <title>Rab40-Cullin5 complex regulates EPLIN and actin cytoskeleton dynamics during cell migration.</title>
        <authorList>
            <person name="Linklater E.S."/>
            <person name="Duncan E.D."/>
            <person name="Han K.J."/>
            <person name="Kaupinis A."/>
            <person name="Valius M."/>
            <person name="Lyons T.R."/>
            <person name="Prekeris R."/>
        </authorList>
    </citation>
    <scope>FUNCTION</scope>
    <scope>IDENTIFICATION IN THE ECS(RAB40B) COMPLEX</scope>
    <scope>MUTAGENESIS OF 212-LEU--PRO-215</scope>
    <scope>SUBCELLULAR LOCATION</scope>
</reference>
<reference key="5">
    <citation type="journal article" date="2022" name="J. Cell Biol.">
        <title>Ubiquitylation by Rab40b/Cul5 regulates Rap2 localization and activity during cell migration.</title>
        <authorList>
            <person name="Duncan E.D."/>
            <person name="Han K.J."/>
            <person name="Trout M.A."/>
            <person name="Prekeris R."/>
        </authorList>
    </citation>
    <scope>FUNCTION</scope>
    <scope>IDENTIFICATION IN THE ECS(RAB40B) COMPLEX</scope>
    <scope>SUBCELLULAR LOCATION</scope>
</reference>